<protein>
    <recommendedName>
        <fullName evidence="1">Lactate utilization protein A</fullName>
    </recommendedName>
</protein>
<accession>Q5WJE1</accession>
<comment type="function">
    <text evidence="1">Is involved in L-lactate degradation and allows cells to grow with lactate as the sole carbon source.</text>
</comment>
<comment type="similarity">
    <text evidence="1">Belongs to the LutA/YkgE family.</text>
</comment>
<evidence type="ECO:0000255" key="1">
    <source>
        <dbReference type="HAMAP-Rule" id="MF_02105"/>
    </source>
</evidence>
<proteinExistence type="inferred from homology"/>
<sequence length="239" mass="26309">MNVSLFVTCLADIFYPGVGKDTVEVLERHGCNVKFPENQICCGQPAFNSGYHEDTKKAAKHTIETFADADYVVLPSGSCAAMLLEYKELFADDPEWEKRAEELASKTYELTQFLVRVLKVEDIGAVCHKKATYHTSCHMSRLLRETEAPFSLLEQVKGLELAPLANKESCCGFGGTFSVKMPAISEQMVEEKVGHIEATGADLLIGADCGCLMNIGGRIERNGKTIEVKHIAQVLNSKE</sequence>
<name>LUTA_SHOC1</name>
<dbReference type="EMBL" id="AP006627">
    <property type="protein sequence ID" value="BAD63514.1"/>
    <property type="molecule type" value="Genomic_DNA"/>
</dbReference>
<dbReference type="RefSeq" id="WP_011245830.1">
    <property type="nucleotide sequence ID" value="NC_006582.1"/>
</dbReference>
<dbReference type="SMR" id="Q5WJE1"/>
<dbReference type="STRING" id="66692.ABC0975"/>
<dbReference type="KEGG" id="bcl:ABC0975"/>
<dbReference type="eggNOG" id="COG0247">
    <property type="taxonomic scope" value="Bacteria"/>
</dbReference>
<dbReference type="HOGENOM" id="CLU_023081_1_0_9"/>
<dbReference type="OrthoDB" id="9770306at2"/>
<dbReference type="Proteomes" id="UP000001168">
    <property type="component" value="Chromosome"/>
</dbReference>
<dbReference type="GO" id="GO:0005829">
    <property type="term" value="C:cytosol"/>
    <property type="evidence" value="ECO:0007669"/>
    <property type="project" value="TreeGrafter"/>
</dbReference>
<dbReference type="GO" id="GO:0016491">
    <property type="term" value="F:oxidoreductase activity"/>
    <property type="evidence" value="ECO:0007669"/>
    <property type="project" value="UniProtKB-ARBA"/>
</dbReference>
<dbReference type="GO" id="GO:0006089">
    <property type="term" value="P:lactate metabolic process"/>
    <property type="evidence" value="ECO:0007669"/>
    <property type="project" value="UniProtKB-UniRule"/>
</dbReference>
<dbReference type="HAMAP" id="MF_02105">
    <property type="entry name" value="LutA"/>
    <property type="match status" value="1"/>
</dbReference>
<dbReference type="InterPro" id="IPR004017">
    <property type="entry name" value="Cys_rich_dom"/>
</dbReference>
<dbReference type="InterPro" id="IPR022822">
    <property type="entry name" value="LutA"/>
</dbReference>
<dbReference type="PANTHER" id="PTHR30296:SF0">
    <property type="entry name" value="LACTATE UTILIZATION PROTEIN A"/>
    <property type="match status" value="1"/>
</dbReference>
<dbReference type="PANTHER" id="PTHR30296">
    <property type="entry name" value="UNCHARACTERIZED PROTEIN YKGE"/>
    <property type="match status" value="1"/>
</dbReference>
<dbReference type="Pfam" id="PF02754">
    <property type="entry name" value="CCG"/>
    <property type="match status" value="2"/>
</dbReference>
<reference key="1">
    <citation type="submission" date="2003-10" db="EMBL/GenBank/DDBJ databases">
        <title>The complete genome sequence of the alkaliphilic Bacillus clausii KSM-K16.</title>
        <authorList>
            <person name="Takaki Y."/>
            <person name="Kageyama Y."/>
            <person name="Shimamura S."/>
            <person name="Suzuki H."/>
            <person name="Nishi S."/>
            <person name="Hatada Y."/>
            <person name="Kawai S."/>
            <person name="Ito S."/>
            <person name="Horikoshi K."/>
        </authorList>
    </citation>
    <scope>NUCLEOTIDE SEQUENCE [LARGE SCALE GENOMIC DNA]</scope>
    <source>
        <strain>KSM-K16</strain>
    </source>
</reference>
<gene>
    <name evidence="1" type="primary">lutA</name>
    <name type="ordered locus">ABC0975</name>
</gene>
<feature type="chain" id="PRO_0000384043" description="Lactate utilization protein A">
    <location>
        <begin position="1"/>
        <end position="239"/>
    </location>
</feature>
<keyword id="KW-1185">Reference proteome</keyword>
<organism>
    <name type="scientific">Shouchella clausii (strain KSM-K16)</name>
    <name type="common">Alkalihalobacillus clausii</name>
    <dbReference type="NCBI Taxonomy" id="66692"/>
    <lineage>
        <taxon>Bacteria</taxon>
        <taxon>Bacillati</taxon>
        <taxon>Bacillota</taxon>
        <taxon>Bacilli</taxon>
        <taxon>Bacillales</taxon>
        <taxon>Bacillaceae</taxon>
        <taxon>Shouchella</taxon>
    </lineage>
</organism>